<gene>
    <name type="primary">CXXS2</name>
    <name type="ordered locus">At2g40790</name>
    <name type="ORF">T7D17.3</name>
</gene>
<feature type="chain" id="PRO_0000394547" description="Thioredoxin-like protein CXXS2">
    <location>
        <begin position="1"/>
        <end position="154"/>
    </location>
</feature>
<feature type="domain" description="Thioredoxin" evidence="2">
    <location>
        <begin position="23"/>
        <end position="148"/>
    </location>
</feature>
<feature type="modified residue" description="Phosphoserine" evidence="1">
    <location>
        <position position="31"/>
    </location>
</feature>
<name>CXXS2_ARATH</name>
<dbReference type="EMBL" id="U35639">
    <property type="protein sequence ID" value="AAC49350.1"/>
    <property type="status" value="ALT_SEQ"/>
    <property type="molecule type" value="Genomic_DNA"/>
</dbReference>
<dbReference type="EMBL" id="CP002685">
    <property type="protein sequence ID" value="AEC09879.1"/>
    <property type="molecule type" value="Genomic_DNA"/>
</dbReference>
<dbReference type="EMBL" id="CP002685">
    <property type="protein sequence ID" value="ANM62990.1"/>
    <property type="molecule type" value="Genomic_DNA"/>
</dbReference>
<dbReference type="EMBL" id="AK118023">
    <property type="protein sequence ID" value="BAC42656.1"/>
    <property type="molecule type" value="mRNA"/>
</dbReference>
<dbReference type="EMBL" id="BT003671">
    <property type="protein sequence ID" value="AAO39899.1"/>
    <property type="molecule type" value="mRNA"/>
</dbReference>
<dbReference type="PIR" id="H84833">
    <property type="entry name" value="H84833"/>
</dbReference>
<dbReference type="RefSeq" id="NP_001318396.1">
    <property type="nucleotide sequence ID" value="NM_001336864.1"/>
</dbReference>
<dbReference type="RefSeq" id="NP_181611.2">
    <property type="nucleotide sequence ID" value="NM_129642.4"/>
</dbReference>
<dbReference type="SMR" id="Q8GXV2"/>
<dbReference type="FunCoup" id="Q8GXV2">
    <property type="interactions" value="959"/>
</dbReference>
<dbReference type="STRING" id="3702.Q8GXV2"/>
<dbReference type="PaxDb" id="3702-AT2G40790.1"/>
<dbReference type="EnsemblPlants" id="AT2G40790.1">
    <property type="protein sequence ID" value="AT2G40790.1"/>
    <property type="gene ID" value="AT2G40790"/>
</dbReference>
<dbReference type="EnsemblPlants" id="AT2G40790.2">
    <property type="protein sequence ID" value="AT2G40790.2"/>
    <property type="gene ID" value="AT2G40790"/>
</dbReference>
<dbReference type="GeneID" id="818676"/>
<dbReference type="Gramene" id="AT2G40790.1">
    <property type="protein sequence ID" value="AT2G40790.1"/>
    <property type="gene ID" value="AT2G40790"/>
</dbReference>
<dbReference type="Gramene" id="AT2G40790.2">
    <property type="protein sequence ID" value="AT2G40790.2"/>
    <property type="gene ID" value="AT2G40790"/>
</dbReference>
<dbReference type="KEGG" id="ath:AT2G40790"/>
<dbReference type="Araport" id="AT2G40790"/>
<dbReference type="TAIR" id="AT2G40790">
    <property type="gene designation" value="CXXS2"/>
</dbReference>
<dbReference type="eggNOG" id="KOG0907">
    <property type="taxonomic scope" value="Eukaryota"/>
</dbReference>
<dbReference type="HOGENOM" id="CLU_090389_14_1_1"/>
<dbReference type="InParanoid" id="Q8GXV2"/>
<dbReference type="OMA" id="CTRIPCC"/>
<dbReference type="OrthoDB" id="2121326at2759"/>
<dbReference type="PhylomeDB" id="Q8GXV2"/>
<dbReference type="PRO" id="PR:Q8GXV2"/>
<dbReference type="Proteomes" id="UP000006548">
    <property type="component" value="Chromosome 2"/>
</dbReference>
<dbReference type="ExpressionAtlas" id="Q8GXV2">
    <property type="expression patterns" value="baseline and differential"/>
</dbReference>
<dbReference type="GO" id="GO:0005829">
    <property type="term" value="C:cytosol"/>
    <property type="evidence" value="ECO:0000314"/>
    <property type="project" value="TAIR"/>
</dbReference>
<dbReference type="GO" id="GO:0003756">
    <property type="term" value="F:protein disulfide isomerase activity"/>
    <property type="evidence" value="ECO:0000314"/>
    <property type="project" value="TAIR"/>
</dbReference>
<dbReference type="CDD" id="cd02947">
    <property type="entry name" value="TRX_family"/>
    <property type="match status" value="1"/>
</dbReference>
<dbReference type="Gene3D" id="3.40.30.10">
    <property type="entry name" value="Glutaredoxin"/>
    <property type="match status" value="1"/>
</dbReference>
<dbReference type="InterPro" id="IPR036249">
    <property type="entry name" value="Thioredoxin-like_sf"/>
</dbReference>
<dbReference type="InterPro" id="IPR013766">
    <property type="entry name" value="Thioredoxin_domain"/>
</dbReference>
<dbReference type="InterPro" id="IPR050620">
    <property type="entry name" value="Thioredoxin_H-type-like"/>
</dbReference>
<dbReference type="PANTHER" id="PTHR10438">
    <property type="entry name" value="THIOREDOXIN"/>
    <property type="match status" value="1"/>
</dbReference>
<dbReference type="PANTHER" id="PTHR10438:SF394">
    <property type="entry name" value="THIOREDOXIN-LIKE PROTEIN CXXS2-RELATED"/>
    <property type="match status" value="1"/>
</dbReference>
<dbReference type="Pfam" id="PF00085">
    <property type="entry name" value="Thioredoxin"/>
    <property type="match status" value="1"/>
</dbReference>
<dbReference type="SUPFAM" id="SSF52833">
    <property type="entry name" value="Thioredoxin-like"/>
    <property type="match status" value="1"/>
</dbReference>
<dbReference type="PROSITE" id="PS51352">
    <property type="entry name" value="THIOREDOXIN_2"/>
    <property type="match status" value="1"/>
</dbReference>
<comment type="function">
    <text evidence="3">Possesses low disulfide reductase activity, but efficient protein disulfide isomerase activity. Does not possess deglutathionylation activity.</text>
</comment>
<comment type="subcellular location">
    <subcellularLocation>
        <location evidence="3">Cytoplasm</location>
    </subcellularLocation>
</comment>
<comment type="tissue specificity">
    <text evidence="3">Ubiquitous.</text>
</comment>
<comment type="similarity">
    <text evidence="4">Belongs to the thioredoxin family.</text>
</comment>
<comment type="caution">
    <text evidence="4">Lacks the conserved cysteine (here Ser-77), present in the redox-active center, which is one of the conserved features of the thioredoxin family.</text>
</comment>
<comment type="sequence caution" evidence="4">
    <conflict type="erroneous gene model prediction">
        <sequence resource="EMBL-CDS" id="AAC49350"/>
    </conflict>
</comment>
<evidence type="ECO:0000250" key="1">
    <source>
        <dbReference type="UniProtKB" id="Q9C9Y6"/>
    </source>
</evidence>
<evidence type="ECO:0000255" key="2">
    <source>
        <dbReference type="PROSITE-ProRule" id="PRU00691"/>
    </source>
</evidence>
<evidence type="ECO:0000269" key="3">
    <source>
    </source>
</evidence>
<evidence type="ECO:0000305" key="4"/>
<keyword id="KW-0963">Cytoplasm</keyword>
<keyword id="KW-0413">Isomerase</keyword>
<keyword id="KW-0597">Phosphoprotein</keyword>
<keyword id="KW-1185">Reference proteome</keyword>
<reference key="1">
    <citation type="journal article" date="1996" name="J. Mol. Evol.">
        <title>Intron position as an evolutionary marker of thioredoxins and thioredoxin domains.</title>
        <authorList>
            <person name="Sahrawy M."/>
            <person name="Hecht V."/>
            <person name="Lopez Jaramillo J."/>
            <person name="Chueca A."/>
            <person name="Chartier Y."/>
            <person name="Meyer Y."/>
        </authorList>
    </citation>
    <scope>NUCLEOTIDE SEQUENCE [GENOMIC DNA]</scope>
    <source>
        <strain>cv. Columbia</strain>
    </source>
</reference>
<reference key="2">
    <citation type="journal article" date="1999" name="Nature">
        <title>Sequence and analysis of chromosome 2 of the plant Arabidopsis thaliana.</title>
        <authorList>
            <person name="Lin X."/>
            <person name="Kaul S."/>
            <person name="Rounsley S.D."/>
            <person name="Shea T.P."/>
            <person name="Benito M.-I."/>
            <person name="Town C.D."/>
            <person name="Fujii C.Y."/>
            <person name="Mason T.M."/>
            <person name="Bowman C.L."/>
            <person name="Barnstead M.E."/>
            <person name="Feldblyum T.V."/>
            <person name="Buell C.R."/>
            <person name="Ketchum K.A."/>
            <person name="Lee J.J."/>
            <person name="Ronning C.M."/>
            <person name="Koo H.L."/>
            <person name="Moffat K.S."/>
            <person name="Cronin L.A."/>
            <person name="Shen M."/>
            <person name="Pai G."/>
            <person name="Van Aken S."/>
            <person name="Umayam L."/>
            <person name="Tallon L.J."/>
            <person name="Gill J.E."/>
            <person name="Adams M.D."/>
            <person name="Carrera A.J."/>
            <person name="Creasy T.H."/>
            <person name="Goodman H.M."/>
            <person name="Somerville C.R."/>
            <person name="Copenhaver G.P."/>
            <person name="Preuss D."/>
            <person name="Nierman W.C."/>
            <person name="White O."/>
            <person name="Eisen J.A."/>
            <person name="Salzberg S.L."/>
            <person name="Fraser C.M."/>
            <person name="Venter J.C."/>
        </authorList>
    </citation>
    <scope>NUCLEOTIDE SEQUENCE [LARGE SCALE GENOMIC DNA]</scope>
    <source>
        <strain>cv. Columbia</strain>
    </source>
</reference>
<reference key="3">
    <citation type="journal article" date="2017" name="Plant J.">
        <title>Araport11: a complete reannotation of the Arabidopsis thaliana reference genome.</title>
        <authorList>
            <person name="Cheng C.Y."/>
            <person name="Krishnakumar V."/>
            <person name="Chan A.P."/>
            <person name="Thibaud-Nissen F."/>
            <person name="Schobel S."/>
            <person name="Town C.D."/>
        </authorList>
    </citation>
    <scope>GENOME REANNOTATION</scope>
    <source>
        <strain>cv. Columbia</strain>
    </source>
</reference>
<reference key="4">
    <citation type="journal article" date="2002" name="Science">
        <title>Functional annotation of a full-length Arabidopsis cDNA collection.</title>
        <authorList>
            <person name="Seki M."/>
            <person name="Narusaka M."/>
            <person name="Kamiya A."/>
            <person name="Ishida J."/>
            <person name="Satou M."/>
            <person name="Sakurai T."/>
            <person name="Nakajima M."/>
            <person name="Enju A."/>
            <person name="Akiyama K."/>
            <person name="Oono Y."/>
            <person name="Muramatsu M."/>
            <person name="Hayashizaki Y."/>
            <person name="Kawai J."/>
            <person name="Carninci P."/>
            <person name="Itoh M."/>
            <person name="Ishii Y."/>
            <person name="Arakawa T."/>
            <person name="Shibata K."/>
            <person name="Shinagawa A."/>
            <person name="Shinozaki K."/>
        </authorList>
    </citation>
    <scope>NUCLEOTIDE SEQUENCE [LARGE SCALE MRNA]</scope>
    <source>
        <strain>cv. Columbia</strain>
    </source>
</reference>
<reference key="5">
    <citation type="journal article" date="2003" name="Science">
        <title>Empirical analysis of transcriptional activity in the Arabidopsis genome.</title>
        <authorList>
            <person name="Yamada K."/>
            <person name="Lim J."/>
            <person name="Dale J.M."/>
            <person name="Chen H."/>
            <person name="Shinn P."/>
            <person name="Palm C.J."/>
            <person name="Southwick A.M."/>
            <person name="Wu H.C."/>
            <person name="Kim C.J."/>
            <person name="Nguyen M."/>
            <person name="Pham P.K."/>
            <person name="Cheuk R.F."/>
            <person name="Karlin-Newmann G."/>
            <person name="Liu S.X."/>
            <person name="Lam B."/>
            <person name="Sakano H."/>
            <person name="Wu T."/>
            <person name="Yu G."/>
            <person name="Miranda M."/>
            <person name="Quach H.L."/>
            <person name="Tripp M."/>
            <person name="Chang C.H."/>
            <person name="Lee J.M."/>
            <person name="Toriumi M.J."/>
            <person name="Chan M.M."/>
            <person name="Tang C.C."/>
            <person name="Onodera C.S."/>
            <person name="Deng J.M."/>
            <person name="Akiyama K."/>
            <person name="Ansari Y."/>
            <person name="Arakawa T."/>
            <person name="Banh J."/>
            <person name="Banno F."/>
            <person name="Bowser L."/>
            <person name="Brooks S.Y."/>
            <person name="Carninci P."/>
            <person name="Chao Q."/>
            <person name="Choy N."/>
            <person name="Enju A."/>
            <person name="Goldsmith A.D."/>
            <person name="Gurjal M."/>
            <person name="Hansen N.F."/>
            <person name="Hayashizaki Y."/>
            <person name="Johnson-Hopson C."/>
            <person name="Hsuan V.W."/>
            <person name="Iida K."/>
            <person name="Karnes M."/>
            <person name="Khan S."/>
            <person name="Koesema E."/>
            <person name="Ishida J."/>
            <person name="Jiang P.X."/>
            <person name="Jones T."/>
            <person name="Kawai J."/>
            <person name="Kamiya A."/>
            <person name="Meyers C."/>
            <person name="Nakajima M."/>
            <person name="Narusaka M."/>
            <person name="Seki M."/>
            <person name="Sakurai T."/>
            <person name="Satou M."/>
            <person name="Tamse R."/>
            <person name="Vaysberg M."/>
            <person name="Wallender E.K."/>
            <person name="Wong C."/>
            <person name="Yamamura Y."/>
            <person name="Yuan S."/>
            <person name="Shinozaki K."/>
            <person name="Davis R.W."/>
            <person name="Theologis A."/>
            <person name="Ecker J.R."/>
        </authorList>
    </citation>
    <scope>NUCLEOTIDE SEQUENCE [LARGE SCALE MRNA]</scope>
    <source>
        <strain>cv. Columbia</strain>
    </source>
</reference>
<reference key="6">
    <citation type="journal article" date="2008" name="Physiol. Plantarum">
        <title>AtCXXS: atypical members of the Arabidopsis thaliana thioredoxin h family with a remarkably high disulfide isomerase activity.</title>
        <authorList>
            <person name="Serrato A.J."/>
            <person name="Guilleminot J."/>
            <person name="Meyer Y."/>
            <person name="Vignols F."/>
        </authorList>
    </citation>
    <scope>FUNCTION</scope>
    <scope>SUBCELLULAR LOCATION</scope>
    <scope>TISSUE SPECIFICITY</scope>
</reference>
<reference key="7">
    <citation type="journal article" date="2009" name="Mol. Plant">
        <title>Comparative genomic study of the thioredoxin family in photosynthetic organisms with emphasis on Populus trichocarpa.</title>
        <authorList>
            <person name="Chibani K."/>
            <person name="Wingsle G."/>
            <person name="Jacquot J.P."/>
            <person name="Gelhaye E."/>
            <person name="Rouhier N."/>
        </authorList>
    </citation>
    <scope>GENE FAMILY</scope>
    <scope>NOMENCLATURE</scope>
</reference>
<accession>Q8GXV2</accession>
<accession>Q38878</accession>
<protein>
    <recommendedName>
        <fullName>Thioredoxin-like protein CXXS2</fullName>
        <shortName>AtCXXS2</shortName>
    </recommendedName>
    <alternativeName>
        <fullName>Mono-cysteine thioredoxin 2</fullName>
    </alternativeName>
</protein>
<proteinExistence type="evidence at transcript level"/>
<sequence length="154" mass="17314">MGNHCTRIPCCKKVCSCICCCNRRNKTQARSQKGSYFIKGKVHPVSRMEKWEEKITEANSHGKILVVNFKASWCLPSKTILPIYQELASTYTSMIFVTIDVEELAEFSHEWNVDATPTVVFLKDGRQMDKLVGGDAAELQKKTAAAANLLLRQS</sequence>
<organism>
    <name type="scientific">Arabidopsis thaliana</name>
    <name type="common">Mouse-ear cress</name>
    <dbReference type="NCBI Taxonomy" id="3702"/>
    <lineage>
        <taxon>Eukaryota</taxon>
        <taxon>Viridiplantae</taxon>
        <taxon>Streptophyta</taxon>
        <taxon>Embryophyta</taxon>
        <taxon>Tracheophyta</taxon>
        <taxon>Spermatophyta</taxon>
        <taxon>Magnoliopsida</taxon>
        <taxon>eudicotyledons</taxon>
        <taxon>Gunneridae</taxon>
        <taxon>Pentapetalae</taxon>
        <taxon>rosids</taxon>
        <taxon>malvids</taxon>
        <taxon>Brassicales</taxon>
        <taxon>Brassicaceae</taxon>
        <taxon>Camelineae</taxon>
        <taxon>Arabidopsis</taxon>
    </lineage>
</organism>